<evidence type="ECO:0000255" key="1">
    <source>
        <dbReference type="HAMAP-Rule" id="MF_01346"/>
    </source>
</evidence>
<accession>P63675</accession>
<accession>Q99SF3</accession>
<name>ATPA_STAAM</name>
<proteinExistence type="inferred from homology"/>
<feature type="chain" id="PRO_0000144351" description="ATP synthase subunit alpha">
    <location>
        <begin position="1"/>
        <end position="502"/>
    </location>
</feature>
<feature type="binding site" evidence="1">
    <location>
        <begin position="169"/>
        <end position="176"/>
    </location>
    <ligand>
        <name>ATP</name>
        <dbReference type="ChEBI" id="CHEBI:30616"/>
    </ligand>
</feature>
<feature type="site" description="Required for activity" evidence="1">
    <location>
        <position position="362"/>
    </location>
</feature>
<keyword id="KW-0066">ATP synthesis</keyword>
<keyword id="KW-0067">ATP-binding</keyword>
<keyword id="KW-1003">Cell membrane</keyword>
<keyword id="KW-0139">CF(1)</keyword>
<keyword id="KW-0375">Hydrogen ion transport</keyword>
<keyword id="KW-0406">Ion transport</keyword>
<keyword id="KW-0472">Membrane</keyword>
<keyword id="KW-0547">Nucleotide-binding</keyword>
<keyword id="KW-1278">Translocase</keyword>
<keyword id="KW-0813">Transport</keyword>
<dbReference type="EC" id="7.1.2.2" evidence="1"/>
<dbReference type="EMBL" id="BA000017">
    <property type="protein sequence ID" value="BAB58267.1"/>
    <property type="molecule type" value="Genomic_DNA"/>
</dbReference>
<dbReference type="RefSeq" id="WP_000974881.1">
    <property type="nucleotide sequence ID" value="NC_002758.2"/>
</dbReference>
<dbReference type="SMR" id="P63675"/>
<dbReference type="KEGG" id="sav:SAV2105"/>
<dbReference type="HOGENOM" id="CLU_010091_2_1_9"/>
<dbReference type="PhylomeDB" id="P63675"/>
<dbReference type="Proteomes" id="UP000002481">
    <property type="component" value="Chromosome"/>
</dbReference>
<dbReference type="GO" id="GO:0005886">
    <property type="term" value="C:plasma membrane"/>
    <property type="evidence" value="ECO:0007669"/>
    <property type="project" value="UniProtKB-SubCell"/>
</dbReference>
<dbReference type="GO" id="GO:0045259">
    <property type="term" value="C:proton-transporting ATP synthase complex"/>
    <property type="evidence" value="ECO:0007669"/>
    <property type="project" value="UniProtKB-KW"/>
</dbReference>
<dbReference type="GO" id="GO:0043531">
    <property type="term" value="F:ADP binding"/>
    <property type="evidence" value="ECO:0007669"/>
    <property type="project" value="TreeGrafter"/>
</dbReference>
<dbReference type="GO" id="GO:0005524">
    <property type="term" value="F:ATP binding"/>
    <property type="evidence" value="ECO:0007669"/>
    <property type="project" value="UniProtKB-UniRule"/>
</dbReference>
<dbReference type="GO" id="GO:0046933">
    <property type="term" value="F:proton-transporting ATP synthase activity, rotational mechanism"/>
    <property type="evidence" value="ECO:0007669"/>
    <property type="project" value="UniProtKB-UniRule"/>
</dbReference>
<dbReference type="CDD" id="cd18113">
    <property type="entry name" value="ATP-synt_F1_alpha_C"/>
    <property type="match status" value="1"/>
</dbReference>
<dbReference type="CDD" id="cd18116">
    <property type="entry name" value="ATP-synt_F1_alpha_N"/>
    <property type="match status" value="1"/>
</dbReference>
<dbReference type="CDD" id="cd01132">
    <property type="entry name" value="F1-ATPase_alpha_CD"/>
    <property type="match status" value="1"/>
</dbReference>
<dbReference type="FunFam" id="1.20.150.20:FF:000001">
    <property type="entry name" value="ATP synthase subunit alpha"/>
    <property type="match status" value="1"/>
</dbReference>
<dbReference type="FunFam" id="2.40.30.20:FF:000001">
    <property type="entry name" value="ATP synthase subunit alpha"/>
    <property type="match status" value="1"/>
</dbReference>
<dbReference type="FunFam" id="3.40.50.300:FF:000002">
    <property type="entry name" value="ATP synthase subunit alpha"/>
    <property type="match status" value="1"/>
</dbReference>
<dbReference type="Gene3D" id="2.40.30.20">
    <property type="match status" value="1"/>
</dbReference>
<dbReference type="Gene3D" id="1.20.150.20">
    <property type="entry name" value="ATP synthase alpha/beta chain, C-terminal domain"/>
    <property type="match status" value="1"/>
</dbReference>
<dbReference type="Gene3D" id="3.40.50.300">
    <property type="entry name" value="P-loop containing nucleotide triphosphate hydrolases"/>
    <property type="match status" value="1"/>
</dbReference>
<dbReference type="HAMAP" id="MF_01346">
    <property type="entry name" value="ATP_synth_alpha_bact"/>
    <property type="match status" value="1"/>
</dbReference>
<dbReference type="InterPro" id="IPR023366">
    <property type="entry name" value="ATP_synth_asu-like_sf"/>
</dbReference>
<dbReference type="InterPro" id="IPR000793">
    <property type="entry name" value="ATP_synth_asu_C"/>
</dbReference>
<dbReference type="InterPro" id="IPR038376">
    <property type="entry name" value="ATP_synth_asu_C_sf"/>
</dbReference>
<dbReference type="InterPro" id="IPR033732">
    <property type="entry name" value="ATP_synth_F1_a_nt-bd_dom"/>
</dbReference>
<dbReference type="InterPro" id="IPR005294">
    <property type="entry name" value="ATP_synth_F1_asu"/>
</dbReference>
<dbReference type="InterPro" id="IPR020003">
    <property type="entry name" value="ATPase_a/bsu_AS"/>
</dbReference>
<dbReference type="InterPro" id="IPR004100">
    <property type="entry name" value="ATPase_F1/V1/A1_a/bsu_N"/>
</dbReference>
<dbReference type="InterPro" id="IPR036121">
    <property type="entry name" value="ATPase_F1/V1/A1_a/bsu_N_sf"/>
</dbReference>
<dbReference type="InterPro" id="IPR000194">
    <property type="entry name" value="ATPase_F1/V1/A1_a/bsu_nucl-bd"/>
</dbReference>
<dbReference type="InterPro" id="IPR027417">
    <property type="entry name" value="P-loop_NTPase"/>
</dbReference>
<dbReference type="NCBIfam" id="TIGR00962">
    <property type="entry name" value="atpA"/>
    <property type="match status" value="1"/>
</dbReference>
<dbReference type="NCBIfam" id="NF009884">
    <property type="entry name" value="PRK13343.1"/>
    <property type="match status" value="1"/>
</dbReference>
<dbReference type="PANTHER" id="PTHR48082">
    <property type="entry name" value="ATP SYNTHASE SUBUNIT ALPHA, MITOCHONDRIAL"/>
    <property type="match status" value="1"/>
</dbReference>
<dbReference type="PANTHER" id="PTHR48082:SF2">
    <property type="entry name" value="ATP SYNTHASE SUBUNIT ALPHA, MITOCHONDRIAL"/>
    <property type="match status" value="1"/>
</dbReference>
<dbReference type="Pfam" id="PF00006">
    <property type="entry name" value="ATP-synt_ab"/>
    <property type="match status" value="1"/>
</dbReference>
<dbReference type="Pfam" id="PF00306">
    <property type="entry name" value="ATP-synt_ab_C"/>
    <property type="match status" value="1"/>
</dbReference>
<dbReference type="Pfam" id="PF02874">
    <property type="entry name" value="ATP-synt_ab_N"/>
    <property type="match status" value="1"/>
</dbReference>
<dbReference type="PIRSF" id="PIRSF039088">
    <property type="entry name" value="F_ATPase_subunit_alpha"/>
    <property type="match status" value="1"/>
</dbReference>
<dbReference type="SUPFAM" id="SSF47917">
    <property type="entry name" value="C-terminal domain of alpha and beta subunits of F1 ATP synthase"/>
    <property type="match status" value="1"/>
</dbReference>
<dbReference type="SUPFAM" id="SSF50615">
    <property type="entry name" value="N-terminal domain of alpha and beta subunits of F1 ATP synthase"/>
    <property type="match status" value="1"/>
</dbReference>
<dbReference type="SUPFAM" id="SSF52540">
    <property type="entry name" value="P-loop containing nucleoside triphosphate hydrolases"/>
    <property type="match status" value="1"/>
</dbReference>
<dbReference type="PROSITE" id="PS00152">
    <property type="entry name" value="ATPASE_ALPHA_BETA"/>
    <property type="match status" value="1"/>
</dbReference>
<organism>
    <name type="scientific">Staphylococcus aureus (strain Mu50 / ATCC 700699)</name>
    <dbReference type="NCBI Taxonomy" id="158878"/>
    <lineage>
        <taxon>Bacteria</taxon>
        <taxon>Bacillati</taxon>
        <taxon>Bacillota</taxon>
        <taxon>Bacilli</taxon>
        <taxon>Bacillales</taxon>
        <taxon>Staphylococcaceae</taxon>
        <taxon>Staphylococcus</taxon>
    </lineage>
</organism>
<sequence>MAIKAEEISALLRSQIENYESEMSVTDVGTVLQIGDGIALIHGLNDVMAGELVEFHNGVLGLAQNLEESNVGVVILGPYTGITEGDEVKRTGRIMEVPVGEELIGRVVNPLGQPIDGQGPINTTKTRPVEKKATGVMDRKSVDEPLQTGIKAIDALVPIGRGQRELIIGDRQTGKTTIAIDTILNQKDQGTICIYVAIGQKDSTVRANVEKLRQAGALDYTIVVAASASEPSPLLYIAPYSGVTMGEEFMFNGKHVLIVYDDLTKQAAAYRELSLLLRRPPGREAYPGDVFYLHSRLLERAAKLNDDLGGGSITALPIIETQAGDISAYVPTNVISITDGQIFLQSDLFFSGVRPAINAGQSVSRVGGSAQIKAMKKVAGTLRLDLASYRELESFAQFGSDLDEFTASKLERGKRTVEVLKQDQNKPLPVEHQVLIIYALTKGYLDDIPVVDITRFEDELNHWAESNATELLNEIRETGGLPDAEKFDTAINEFKKSFSKSE</sequence>
<reference key="1">
    <citation type="journal article" date="2001" name="Lancet">
        <title>Whole genome sequencing of meticillin-resistant Staphylococcus aureus.</title>
        <authorList>
            <person name="Kuroda M."/>
            <person name="Ohta T."/>
            <person name="Uchiyama I."/>
            <person name="Baba T."/>
            <person name="Yuzawa H."/>
            <person name="Kobayashi I."/>
            <person name="Cui L."/>
            <person name="Oguchi A."/>
            <person name="Aoki K."/>
            <person name="Nagai Y."/>
            <person name="Lian J.-Q."/>
            <person name="Ito T."/>
            <person name="Kanamori M."/>
            <person name="Matsumaru H."/>
            <person name="Maruyama A."/>
            <person name="Murakami H."/>
            <person name="Hosoyama A."/>
            <person name="Mizutani-Ui Y."/>
            <person name="Takahashi N.K."/>
            <person name="Sawano T."/>
            <person name="Inoue R."/>
            <person name="Kaito C."/>
            <person name="Sekimizu K."/>
            <person name="Hirakawa H."/>
            <person name="Kuhara S."/>
            <person name="Goto S."/>
            <person name="Yabuzaki J."/>
            <person name="Kanehisa M."/>
            <person name="Yamashita A."/>
            <person name="Oshima K."/>
            <person name="Furuya K."/>
            <person name="Yoshino C."/>
            <person name="Shiba T."/>
            <person name="Hattori M."/>
            <person name="Ogasawara N."/>
            <person name="Hayashi H."/>
            <person name="Hiramatsu K."/>
        </authorList>
    </citation>
    <scope>NUCLEOTIDE SEQUENCE [LARGE SCALE GENOMIC DNA]</scope>
    <source>
        <strain>Mu50 / ATCC 700699</strain>
    </source>
</reference>
<protein>
    <recommendedName>
        <fullName evidence="1">ATP synthase subunit alpha</fullName>
        <ecNumber evidence="1">7.1.2.2</ecNumber>
    </recommendedName>
    <alternativeName>
        <fullName evidence="1">ATP synthase F1 sector subunit alpha</fullName>
    </alternativeName>
    <alternativeName>
        <fullName evidence="1">F-ATPase subunit alpha</fullName>
    </alternativeName>
</protein>
<comment type="function">
    <text evidence="1">Produces ATP from ADP in the presence of a proton gradient across the membrane. The alpha chain is a regulatory subunit.</text>
</comment>
<comment type="catalytic activity">
    <reaction evidence="1">
        <text>ATP + H2O + 4 H(+)(in) = ADP + phosphate + 5 H(+)(out)</text>
        <dbReference type="Rhea" id="RHEA:57720"/>
        <dbReference type="ChEBI" id="CHEBI:15377"/>
        <dbReference type="ChEBI" id="CHEBI:15378"/>
        <dbReference type="ChEBI" id="CHEBI:30616"/>
        <dbReference type="ChEBI" id="CHEBI:43474"/>
        <dbReference type="ChEBI" id="CHEBI:456216"/>
        <dbReference type="EC" id="7.1.2.2"/>
    </reaction>
</comment>
<comment type="subunit">
    <text evidence="1">F-type ATPases have 2 components, CF(1) - the catalytic core - and CF(0) - the membrane proton channel. CF(1) has five subunits: alpha(3), beta(3), gamma(1), delta(1), epsilon(1). CF(0) has three main subunits: a(1), b(2) and c(9-12). The alpha and beta chains form an alternating ring which encloses part of the gamma chain. CF(1) is attached to CF(0) by a central stalk formed by the gamma and epsilon chains, while a peripheral stalk is formed by the delta and b chains.</text>
</comment>
<comment type="subcellular location">
    <subcellularLocation>
        <location evidence="1">Cell membrane</location>
        <topology evidence="1">Peripheral membrane protein</topology>
    </subcellularLocation>
</comment>
<comment type="similarity">
    <text evidence="1">Belongs to the ATPase alpha/beta chains family.</text>
</comment>
<gene>
    <name evidence="1" type="primary">atpA</name>
    <name type="ordered locus">SAV2105</name>
</gene>